<comment type="function">
    <text evidence="1">A GTPase-activating protein (GAP) that modifies Der/EngA GTPase function. May play a role in ribosome biogenesis.</text>
</comment>
<comment type="subunit">
    <text evidence="1">Interacts with Der.</text>
</comment>
<comment type="similarity">
    <text evidence="1">Belongs to the YihI family.</text>
</comment>
<organism>
    <name type="scientific">Escherichia coli (strain SMS-3-5 / SECEC)</name>
    <dbReference type="NCBI Taxonomy" id="439855"/>
    <lineage>
        <taxon>Bacteria</taxon>
        <taxon>Pseudomonadati</taxon>
        <taxon>Pseudomonadota</taxon>
        <taxon>Gammaproteobacteria</taxon>
        <taxon>Enterobacterales</taxon>
        <taxon>Enterobacteriaceae</taxon>
        <taxon>Escherichia</taxon>
    </lineage>
</organism>
<gene>
    <name evidence="1" type="primary">yihI</name>
    <name type="ordered locus">EcSMS35_4249</name>
</gene>
<sequence>MKPSSSNSRSKGHAKARRKTREELDQEARDRKRQKKRRGHAPGSRAAGGNTSSGSKGQNAPKDPRIGSKTPIPLGVTEKVTKQHKPKSEKPMLSPQAELELLETDERLDALLERLEAGETLSAEEQSWVDAKLDRIDELMQKLGLSYDDDEEEEEDEKQEDMMRLLRGN</sequence>
<proteinExistence type="inferred from homology"/>
<reference key="1">
    <citation type="journal article" date="2008" name="J. Bacteriol.">
        <title>Insights into the environmental resistance gene pool from the genome sequence of the multidrug-resistant environmental isolate Escherichia coli SMS-3-5.</title>
        <authorList>
            <person name="Fricke W.F."/>
            <person name="Wright M.S."/>
            <person name="Lindell A.H."/>
            <person name="Harkins D.M."/>
            <person name="Baker-Austin C."/>
            <person name="Ravel J."/>
            <person name="Stepanauskas R."/>
        </authorList>
    </citation>
    <scope>NUCLEOTIDE SEQUENCE [LARGE SCALE GENOMIC DNA]</scope>
    <source>
        <strain>SMS-3-5 / SECEC</strain>
    </source>
</reference>
<dbReference type="EMBL" id="CP000970">
    <property type="protein sequence ID" value="ACB16390.1"/>
    <property type="molecule type" value="Genomic_DNA"/>
</dbReference>
<dbReference type="RefSeq" id="WP_001572146.1">
    <property type="nucleotide sequence ID" value="NC_010498.1"/>
</dbReference>
<dbReference type="SMR" id="B1LMP8"/>
<dbReference type="KEGG" id="ecm:EcSMS35_4249"/>
<dbReference type="HOGENOM" id="CLU_094104_2_0_6"/>
<dbReference type="Proteomes" id="UP000007011">
    <property type="component" value="Chromosome"/>
</dbReference>
<dbReference type="GO" id="GO:0005096">
    <property type="term" value="F:GTPase activator activity"/>
    <property type="evidence" value="ECO:0007669"/>
    <property type="project" value="UniProtKB-KW"/>
</dbReference>
<dbReference type="GO" id="GO:0042254">
    <property type="term" value="P:ribosome biogenesis"/>
    <property type="evidence" value="ECO:0007669"/>
    <property type="project" value="UniProtKB-KW"/>
</dbReference>
<dbReference type="HAMAP" id="MF_01058">
    <property type="entry name" value="GAP_YihI"/>
    <property type="match status" value="1"/>
</dbReference>
<dbReference type="InterPro" id="IPR007336">
    <property type="entry name" value="YihI"/>
</dbReference>
<dbReference type="NCBIfam" id="NF003560">
    <property type="entry name" value="PRK05244.1-1"/>
    <property type="match status" value="1"/>
</dbReference>
<dbReference type="Pfam" id="PF04220">
    <property type="entry name" value="YihI"/>
    <property type="match status" value="1"/>
</dbReference>
<accession>B1LMP8</accession>
<name>YIHI_ECOSM</name>
<evidence type="ECO:0000255" key="1">
    <source>
        <dbReference type="HAMAP-Rule" id="MF_01058"/>
    </source>
</evidence>
<evidence type="ECO:0000256" key="2">
    <source>
        <dbReference type="SAM" id="MobiDB-lite"/>
    </source>
</evidence>
<keyword id="KW-0343">GTPase activation</keyword>
<keyword id="KW-0690">Ribosome biogenesis</keyword>
<protein>
    <recommendedName>
        <fullName evidence="1">Der GTPase-activating protein YihI</fullName>
    </recommendedName>
</protein>
<feature type="chain" id="PRO_1000136385" description="Der GTPase-activating protein YihI">
    <location>
        <begin position="1"/>
        <end position="169"/>
    </location>
</feature>
<feature type="region of interest" description="Disordered" evidence="2">
    <location>
        <begin position="1"/>
        <end position="100"/>
    </location>
</feature>
<feature type="region of interest" description="Disordered" evidence="2">
    <location>
        <begin position="144"/>
        <end position="169"/>
    </location>
</feature>
<feature type="compositionally biased region" description="Basic residues" evidence="2">
    <location>
        <begin position="10"/>
        <end position="19"/>
    </location>
</feature>
<feature type="compositionally biased region" description="Basic and acidic residues" evidence="2">
    <location>
        <begin position="20"/>
        <end position="30"/>
    </location>
</feature>
<feature type="compositionally biased region" description="Basic residues" evidence="2">
    <location>
        <begin position="31"/>
        <end position="40"/>
    </location>
</feature>
<feature type="compositionally biased region" description="Polar residues" evidence="2">
    <location>
        <begin position="49"/>
        <end position="58"/>
    </location>
</feature>
<feature type="compositionally biased region" description="Acidic residues" evidence="2">
    <location>
        <begin position="147"/>
        <end position="159"/>
    </location>
</feature>
<feature type="compositionally biased region" description="Basic and acidic residues" evidence="2">
    <location>
        <begin position="160"/>
        <end position="169"/>
    </location>
</feature>